<keyword id="KW-0121">Carboxypeptidase</keyword>
<keyword id="KW-0256">Endoplasmic reticulum</keyword>
<keyword id="KW-0325">Glycoprotein</keyword>
<keyword id="KW-0333">Golgi apparatus</keyword>
<keyword id="KW-0378">Hydrolase</keyword>
<keyword id="KW-0458">Lysosome</keyword>
<keyword id="KW-0479">Metal-binding</keyword>
<keyword id="KW-0482">Metalloprotease</keyword>
<keyword id="KW-0645">Protease</keyword>
<keyword id="KW-1185">Reference proteome</keyword>
<keyword id="KW-0964">Secreted</keyword>
<keyword id="KW-0732">Signal</keyword>
<keyword id="KW-0862">Zinc</keyword>
<keyword id="KW-0865">Zymogen</keyword>
<gene>
    <name type="primary">CPQ</name>
    <name type="synonym">PGCP</name>
</gene>
<organism>
    <name type="scientific">Bos taurus</name>
    <name type="common">Bovine</name>
    <dbReference type="NCBI Taxonomy" id="9913"/>
    <lineage>
        <taxon>Eukaryota</taxon>
        <taxon>Metazoa</taxon>
        <taxon>Chordata</taxon>
        <taxon>Craniata</taxon>
        <taxon>Vertebrata</taxon>
        <taxon>Euteleostomi</taxon>
        <taxon>Mammalia</taxon>
        <taxon>Eutheria</taxon>
        <taxon>Laurasiatheria</taxon>
        <taxon>Artiodactyla</taxon>
        <taxon>Ruminantia</taxon>
        <taxon>Pecora</taxon>
        <taxon>Bovidae</taxon>
        <taxon>Bovinae</taxon>
        <taxon>Bos</taxon>
    </lineage>
</organism>
<dbReference type="EC" id="3.4.17.-"/>
<dbReference type="EMBL" id="BC118309">
    <property type="protein sequence ID" value="AAI18310.1"/>
    <property type="molecule type" value="mRNA"/>
</dbReference>
<dbReference type="RefSeq" id="NP_001069716.1">
    <property type="nucleotide sequence ID" value="NM_001076248.1"/>
</dbReference>
<dbReference type="SMR" id="Q17QK3"/>
<dbReference type="FunCoup" id="Q17QK3">
    <property type="interactions" value="187"/>
</dbReference>
<dbReference type="STRING" id="9913.ENSBTAP00000068738"/>
<dbReference type="MEROPS" id="M28.014"/>
<dbReference type="GlyCosmos" id="Q17QK3">
    <property type="glycosylation" value="6 sites, No reported glycans"/>
</dbReference>
<dbReference type="GlyGen" id="Q17QK3">
    <property type="glycosylation" value="6 sites"/>
</dbReference>
<dbReference type="PaxDb" id="9913-ENSBTAP00000015799"/>
<dbReference type="Ensembl" id="ENSBTAT00000015799.4">
    <property type="protein sequence ID" value="ENSBTAP00000015799.3"/>
    <property type="gene ID" value="ENSBTAG00000011908.5"/>
</dbReference>
<dbReference type="GeneID" id="540923"/>
<dbReference type="KEGG" id="bta:540923"/>
<dbReference type="CTD" id="10404"/>
<dbReference type="VEuPathDB" id="HostDB:ENSBTAG00000011908"/>
<dbReference type="VGNC" id="VGNC:27668">
    <property type="gene designation" value="CPQ"/>
</dbReference>
<dbReference type="eggNOG" id="KOG2195">
    <property type="taxonomic scope" value="Eukaryota"/>
</dbReference>
<dbReference type="GeneTree" id="ENSGT00390000018110"/>
<dbReference type="HOGENOM" id="CLU_033697_1_1_1"/>
<dbReference type="InParanoid" id="Q17QK3"/>
<dbReference type="OMA" id="IVFYNRP"/>
<dbReference type="OrthoDB" id="10013407at2759"/>
<dbReference type="TreeFam" id="TF323248"/>
<dbReference type="Proteomes" id="UP000009136">
    <property type="component" value="Chromosome 14"/>
</dbReference>
<dbReference type="Bgee" id="ENSBTAG00000011908">
    <property type="expression patterns" value="Expressed in thyroid gland and 100 other cell types or tissues"/>
</dbReference>
<dbReference type="GO" id="GO:0005737">
    <property type="term" value="C:cytoplasm"/>
    <property type="evidence" value="ECO:0000250"/>
    <property type="project" value="UniProtKB"/>
</dbReference>
<dbReference type="GO" id="GO:0005783">
    <property type="term" value="C:endoplasmic reticulum"/>
    <property type="evidence" value="ECO:0000250"/>
    <property type="project" value="UniProtKB"/>
</dbReference>
<dbReference type="GO" id="GO:0005615">
    <property type="term" value="C:extracellular space"/>
    <property type="evidence" value="ECO:0000250"/>
    <property type="project" value="UniProtKB"/>
</dbReference>
<dbReference type="GO" id="GO:0005794">
    <property type="term" value="C:Golgi apparatus"/>
    <property type="evidence" value="ECO:0000250"/>
    <property type="project" value="UniProtKB"/>
</dbReference>
<dbReference type="GO" id="GO:0005764">
    <property type="term" value="C:lysosome"/>
    <property type="evidence" value="ECO:0000250"/>
    <property type="project" value="UniProtKB"/>
</dbReference>
<dbReference type="GO" id="GO:0004180">
    <property type="term" value="F:carboxypeptidase activity"/>
    <property type="evidence" value="ECO:0007669"/>
    <property type="project" value="UniProtKB-KW"/>
</dbReference>
<dbReference type="GO" id="GO:0046872">
    <property type="term" value="F:metal ion binding"/>
    <property type="evidence" value="ECO:0007669"/>
    <property type="project" value="UniProtKB-KW"/>
</dbReference>
<dbReference type="GO" id="GO:0070573">
    <property type="term" value="F:metallodipeptidase activity"/>
    <property type="evidence" value="ECO:0000250"/>
    <property type="project" value="UniProtKB"/>
</dbReference>
<dbReference type="GO" id="GO:0042803">
    <property type="term" value="F:protein homodimerization activity"/>
    <property type="evidence" value="ECO:0000250"/>
    <property type="project" value="UniProtKB"/>
</dbReference>
<dbReference type="GO" id="GO:0043171">
    <property type="term" value="P:peptide catabolic process"/>
    <property type="evidence" value="ECO:0000250"/>
    <property type="project" value="UniProtKB"/>
</dbReference>
<dbReference type="GO" id="GO:0006508">
    <property type="term" value="P:proteolysis"/>
    <property type="evidence" value="ECO:0000250"/>
    <property type="project" value="UniProtKB"/>
</dbReference>
<dbReference type="GO" id="GO:0006590">
    <property type="term" value="P:thyroid hormone generation"/>
    <property type="evidence" value="ECO:0000250"/>
    <property type="project" value="UniProtKB"/>
</dbReference>
<dbReference type="GO" id="GO:0042246">
    <property type="term" value="P:tissue regeneration"/>
    <property type="evidence" value="ECO:0000250"/>
    <property type="project" value="UniProtKB"/>
</dbReference>
<dbReference type="CDD" id="cd03883">
    <property type="entry name" value="M28_Pgcp_like"/>
    <property type="match status" value="1"/>
</dbReference>
<dbReference type="FunFam" id="3.40.630.10:FF:000036">
    <property type="entry name" value="Carboxypeptidase Q"/>
    <property type="match status" value="1"/>
</dbReference>
<dbReference type="FunFam" id="3.40.630.10:FF:000112">
    <property type="entry name" value="Carboxypeptidase Q"/>
    <property type="match status" value="1"/>
</dbReference>
<dbReference type="FunFam" id="3.50.30.30:FF:000009">
    <property type="entry name" value="Carboxypeptidase Q"/>
    <property type="match status" value="1"/>
</dbReference>
<dbReference type="Gene3D" id="3.50.30.30">
    <property type="match status" value="1"/>
</dbReference>
<dbReference type="Gene3D" id="3.40.630.10">
    <property type="entry name" value="Zn peptidases"/>
    <property type="match status" value="1"/>
</dbReference>
<dbReference type="InterPro" id="IPR039866">
    <property type="entry name" value="CPQ"/>
</dbReference>
<dbReference type="InterPro" id="IPR007484">
    <property type="entry name" value="Peptidase_M28"/>
</dbReference>
<dbReference type="PANTHER" id="PTHR12053:SF3">
    <property type="entry name" value="CARBOXYPEPTIDASE Q"/>
    <property type="match status" value="1"/>
</dbReference>
<dbReference type="PANTHER" id="PTHR12053">
    <property type="entry name" value="PROTEASE FAMILY M28 PLASMA GLUTAMATE CARBOXYPEPTIDASE-RELATED"/>
    <property type="match status" value="1"/>
</dbReference>
<dbReference type="Pfam" id="PF04389">
    <property type="entry name" value="Peptidase_M28"/>
    <property type="match status" value="1"/>
</dbReference>
<dbReference type="SUPFAM" id="SSF53187">
    <property type="entry name" value="Zn-dependent exopeptidases"/>
    <property type="match status" value="1"/>
</dbReference>
<comment type="function">
    <text evidence="1">Carboxypeptidase that may play an important role in the hydrolysis of circulating peptides. Catalyzes the hydrolysis of dipeptides with unsubstituted terminals into amino acids. May play a role in the liberation of thyroxine hormone from its thyroglobulin (Tg) precursor (By similarity).</text>
</comment>
<comment type="subunit">
    <text evidence="1">Homodimer. The monomeric form is inactive while the homodimer is active (By similarity).</text>
</comment>
<comment type="subcellular location">
    <subcellularLocation>
        <location evidence="1">Endoplasmic reticulum</location>
    </subcellularLocation>
    <subcellularLocation>
        <location evidence="1">Golgi apparatus</location>
    </subcellularLocation>
    <subcellularLocation>
        <location evidence="1">Lysosome</location>
    </subcellularLocation>
    <subcellularLocation>
        <location evidence="1">Secreted</location>
    </subcellularLocation>
    <text evidence="1">Secretion is stimulated by TSH/thyroid-stimulating hormone, INS/insulin and SST/somatostatin.</text>
</comment>
<comment type="PTM">
    <text evidence="1">N-glycosylated. The secreted form is modified by hybrid or complex type oligosaccharide chains.</text>
</comment>
<comment type="similarity">
    <text evidence="3">Belongs to the peptidase M28 family.</text>
</comment>
<protein>
    <recommendedName>
        <fullName>Carboxypeptidase Q</fullName>
        <ecNumber>3.4.17.-</ecNumber>
    </recommendedName>
    <alternativeName>
        <fullName>Plasma glutamate carboxypeptidase</fullName>
    </alternativeName>
</protein>
<evidence type="ECO:0000250" key="1"/>
<evidence type="ECO:0000255" key="2"/>
<evidence type="ECO:0000305" key="3"/>
<accession>Q17QK3</accession>
<feature type="signal peptide" evidence="2">
    <location>
        <begin position="1"/>
        <end position="20"/>
    </location>
</feature>
<feature type="propeptide" id="PRO_0000312258" evidence="1">
    <location>
        <begin position="21"/>
        <end position="44"/>
    </location>
</feature>
<feature type="chain" id="PRO_0000312259" description="Carboxypeptidase Q">
    <location>
        <begin position="45"/>
        <end position="472"/>
    </location>
</feature>
<feature type="active site" description="Nucleophile" evidence="1">
    <location>
        <position position="336"/>
    </location>
</feature>
<feature type="binding site" evidence="1">
    <location>
        <position position="290"/>
    </location>
    <ligand>
        <name>Zn(2+)</name>
        <dbReference type="ChEBI" id="CHEBI:29105"/>
        <label>1</label>
    </ligand>
</feature>
<feature type="binding site" evidence="1">
    <location>
        <position position="302"/>
    </location>
    <ligand>
        <name>Zn(2+)</name>
        <dbReference type="ChEBI" id="CHEBI:29105"/>
        <label>1</label>
    </ligand>
</feature>
<feature type="binding site" evidence="1">
    <location>
        <position position="302"/>
    </location>
    <ligand>
        <name>Zn(2+)</name>
        <dbReference type="ChEBI" id="CHEBI:29105"/>
        <label>2</label>
        <note>catalytic</note>
    </ligand>
</feature>
<feature type="binding site" evidence="1">
    <location>
        <position position="337"/>
    </location>
    <ligand>
        <name>Zn(2+)</name>
        <dbReference type="ChEBI" id="CHEBI:29105"/>
        <label>2</label>
        <note>catalytic</note>
    </ligand>
</feature>
<feature type="binding site" evidence="1">
    <location>
        <position position="364"/>
    </location>
    <ligand>
        <name>Zn(2+)</name>
        <dbReference type="ChEBI" id="CHEBI:29105"/>
        <label>1</label>
    </ligand>
</feature>
<feature type="binding site" evidence="1">
    <location>
        <position position="434"/>
    </location>
    <ligand>
        <name>Zn(2+)</name>
        <dbReference type="ChEBI" id="CHEBI:29105"/>
        <label>2</label>
        <note>catalytic</note>
    </ligand>
</feature>
<feature type="glycosylation site" description="N-linked (GlcNAc...) asparagine" evidence="2">
    <location>
        <position position="52"/>
    </location>
</feature>
<feature type="glycosylation site" description="N-linked (GlcNAc...) asparagine" evidence="2">
    <location>
        <position position="61"/>
    </location>
</feature>
<feature type="glycosylation site" description="N-linked (GlcNAc...) asparagine" evidence="2">
    <location>
        <position position="179"/>
    </location>
</feature>
<feature type="glycosylation site" description="N-linked (GlcNAc...) asparagine" evidence="2">
    <location>
        <position position="353"/>
    </location>
</feature>
<feature type="glycosylation site" description="N-linked (GlcNAc...) asparagine" evidence="2">
    <location>
        <position position="356"/>
    </location>
</feature>
<feature type="glycosylation site" description="N-linked (GlcNAc...) asparagine" evidence="2">
    <location>
        <position position="396"/>
    </location>
</feature>
<reference key="1">
    <citation type="submission" date="2006-06" db="EMBL/GenBank/DDBJ databases">
        <authorList>
            <consortium name="NIH - Mammalian Gene Collection (MGC) project"/>
        </authorList>
    </citation>
    <scope>NUCLEOTIDE SEQUENCE [LARGE SCALE MRNA]</scope>
    <source>
        <strain>Hereford</strain>
        <tissue>Brain cortex</tissue>
    </source>
</reference>
<sequence length="472" mass="51679">MKFLLFMFVGVVHLLPLASGKAIYGNGPSQRTFQEIKEEIAHYGDVAKSIINLTVYGKAQNRSYERLALLVDTVGPRLSGSKNLERAIEIMQQNLKGDGLENVHLEPVKIPHWERGEESAVMLEPRIHKMAILGLGSSIGTPPEGITAEVLVVTSFDELQRRGPDAEGKIVVYNQPYTNYSAAVQYRMEGAVEAAKVGALASLIRSVASFSIYSPHTGIQEYQKGVPKIPTACITVEDAEMMSRMASRGNRIVVQLKMGAKSYPDADSFNTVAEITGSKYPEQVVLVSGHLDSWDVGQGAMDDGGGAFISWEALSLIKDLGLRPKRTLRLVLWTAEEQGGVGSSQYYQLHKANSSNYSLVMESDLGTFLPSGLKFTGSDKARVIMEEVMSLLQPINITQVLKAGDGTDINFWIQDGVPGASLLDDLYKYFSFHHSHGDTMTVMDPKQMNVAAAVWAVVSYVVADLEEMLPRS</sequence>
<name>CBPQ_BOVIN</name>
<proteinExistence type="evidence at transcript level"/>